<comment type="function">
    <text evidence="1">Multifunctional enzyme that catalyzes the SAM-dependent methylations of uroporphyrinogen III at position C-2 and C-7 to form precorrin-2 via precorrin-1. Then it catalyzes the NAD-dependent ring dehydrogenation of precorrin-2 to yield sirohydrochlorin. Finally, it catalyzes the ferrochelation of sirohydrochlorin to yield siroheme.</text>
</comment>
<comment type="catalytic activity">
    <reaction evidence="1">
        <text>uroporphyrinogen III + 2 S-adenosyl-L-methionine = precorrin-2 + 2 S-adenosyl-L-homocysteine + H(+)</text>
        <dbReference type="Rhea" id="RHEA:32459"/>
        <dbReference type="ChEBI" id="CHEBI:15378"/>
        <dbReference type="ChEBI" id="CHEBI:57308"/>
        <dbReference type="ChEBI" id="CHEBI:57856"/>
        <dbReference type="ChEBI" id="CHEBI:58827"/>
        <dbReference type="ChEBI" id="CHEBI:59789"/>
        <dbReference type="EC" id="2.1.1.107"/>
    </reaction>
</comment>
<comment type="catalytic activity">
    <reaction evidence="1">
        <text>precorrin-2 + NAD(+) = sirohydrochlorin + NADH + 2 H(+)</text>
        <dbReference type="Rhea" id="RHEA:15613"/>
        <dbReference type="ChEBI" id="CHEBI:15378"/>
        <dbReference type="ChEBI" id="CHEBI:57540"/>
        <dbReference type="ChEBI" id="CHEBI:57945"/>
        <dbReference type="ChEBI" id="CHEBI:58351"/>
        <dbReference type="ChEBI" id="CHEBI:58827"/>
        <dbReference type="EC" id="1.3.1.76"/>
    </reaction>
</comment>
<comment type="catalytic activity">
    <reaction evidence="1">
        <text>siroheme + 2 H(+) = sirohydrochlorin + Fe(2+)</text>
        <dbReference type="Rhea" id="RHEA:24360"/>
        <dbReference type="ChEBI" id="CHEBI:15378"/>
        <dbReference type="ChEBI" id="CHEBI:29033"/>
        <dbReference type="ChEBI" id="CHEBI:58351"/>
        <dbReference type="ChEBI" id="CHEBI:60052"/>
        <dbReference type="EC" id="4.99.1.4"/>
    </reaction>
</comment>
<comment type="pathway">
    <text evidence="1">Cofactor biosynthesis; adenosylcobalamin biosynthesis; precorrin-2 from uroporphyrinogen III: step 1/1.</text>
</comment>
<comment type="pathway">
    <text evidence="1">Cofactor biosynthesis; adenosylcobalamin biosynthesis; sirohydrochlorin from precorrin-2: step 1/1.</text>
</comment>
<comment type="pathway">
    <text evidence="1">Porphyrin-containing compound metabolism; siroheme biosynthesis; precorrin-2 from uroporphyrinogen III: step 1/1.</text>
</comment>
<comment type="pathway">
    <text evidence="1">Porphyrin-containing compound metabolism; siroheme biosynthesis; siroheme from sirohydrochlorin: step 1/1.</text>
</comment>
<comment type="pathway">
    <text evidence="1">Porphyrin-containing compound metabolism; siroheme biosynthesis; sirohydrochlorin from precorrin-2: step 1/1.</text>
</comment>
<comment type="similarity">
    <text evidence="1">In the N-terminal section; belongs to the precorrin-2 dehydrogenase / sirohydrochlorin ferrochelatase family.</text>
</comment>
<comment type="similarity">
    <text evidence="1">In the C-terminal section; belongs to the precorrin methyltransferase family.</text>
</comment>
<gene>
    <name evidence="1" type="primary">cysG</name>
    <name type="ordered locus">Bfl161</name>
</gene>
<proteinExistence type="inferred from homology"/>
<organism>
    <name type="scientific">Blochmanniella floridana</name>
    <dbReference type="NCBI Taxonomy" id="203907"/>
    <lineage>
        <taxon>Bacteria</taxon>
        <taxon>Pseudomonadati</taxon>
        <taxon>Pseudomonadota</taxon>
        <taxon>Gammaproteobacteria</taxon>
        <taxon>Enterobacterales</taxon>
        <taxon>Enterobacteriaceae</taxon>
        <taxon>ant endosymbionts</taxon>
        <taxon>Candidatus Blochmanniella</taxon>
    </lineage>
</organism>
<sequence length="461" mass="51478">MRYLPLFVYLNNKPVLVVGGGIVAFRKVQILQKTGAIIQIVAKTLCLNLKTTLFKKKIIWIGKVFQISMLDNVFLVIIATDDTDFNDMVFKYAEKRHILVNTVDDPAKCSFIFPAIIDRSPILIGISSGGQAPVLIRMLKEKLESLIPMSIGYVASLAGIWRNKIKQHITDIVYRRFFWEKLFYNGQISLLVEKGNFRKANRVIKDAVLNQLHNRKQGSVSLVGAGPGDKGLLTIRGLQVIQTADIILYDYLVNPDILDLSRKDANKICVGKIAKKHSISQNNLNHFMIQLAQQGNNVVRLKGGDSFIFGRGGEELQAVSKAGIMFQVVPGITSGIGVAAYAGIPLTHREYAHSVVFMTGHKRHQGDYKINWSLLSDNKQTIVIYMGQLNAVNISKNLICHGRHIYTPVAIISRGTYLDQKILIGTLIELEKLIYMVKKPTLLIIGDVVSLHNEISWFGNG</sequence>
<dbReference type="EC" id="2.1.1.107" evidence="1"/>
<dbReference type="EC" id="1.3.1.76" evidence="1"/>
<dbReference type="EC" id="4.99.1.4" evidence="1"/>
<dbReference type="EMBL" id="BX248583">
    <property type="protein sequence ID" value="CAD83682.1"/>
    <property type="molecule type" value="Genomic_DNA"/>
</dbReference>
<dbReference type="SMR" id="Q7VQG9"/>
<dbReference type="STRING" id="203907.Bfl161"/>
<dbReference type="KEGG" id="bfl:Bfl161"/>
<dbReference type="eggNOG" id="COG0007">
    <property type="taxonomic scope" value="Bacteria"/>
</dbReference>
<dbReference type="eggNOG" id="COG1648">
    <property type="taxonomic scope" value="Bacteria"/>
</dbReference>
<dbReference type="HOGENOM" id="CLU_011276_2_0_6"/>
<dbReference type="OrthoDB" id="9815856at2"/>
<dbReference type="UniPathway" id="UPA00148">
    <property type="reaction ID" value="UER00211"/>
</dbReference>
<dbReference type="UniPathway" id="UPA00148">
    <property type="reaction ID" value="UER00222"/>
</dbReference>
<dbReference type="UniPathway" id="UPA00262">
    <property type="reaction ID" value="UER00211"/>
</dbReference>
<dbReference type="UniPathway" id="UPA00262">
    <property type="reaction ID" value="UER00222"/>
</dbReference>
<dbReference type="UniPathway" id="UPA00262">
    <property type="reaction ID" value="UER00376"/>
</dbReference>
<dbReference type="Proteomes" id="UP000002192">
    <property type="component" value="Chromosome"/>
</dbReference>
<dbReference type="GO" id="GO:0051287">
    <property type="term" value="F:NAD binding"/>
    <property type="evidence" value="ECO:0007669"/>
    <property type="project" value="InterPro"/>
</dbReference>
<dbReference type="GO" id="GO:0043115">
    <property type="term" value="F:precorrin-2 dehydrogenase activity"/>
    <property type="evidence" value="ECO:0007669"/>
    <property type="project" value="UniProtKB-UniRule"/>
</dbReference>
<dbReference type="GO" id="GO:0051266">
    <property type="term" value="F:sirohydrochlorin ferrochelatase activity"/>
    <property type="evidence" value="ECO:0007669"/>
    <property type="project" value="UniProtKB-EC"/>
</dbReference>
<dbReference type="GO" id="GO:0004851">
    <property type="term" value="F:uroporphyrin-III C-methyltransferase activity"/>
    <property type="evidence" value="ECO:0007669"/>
    <property type="project" value="UniProtKB-UniRule"/>
</dbReference>
<dbReference type="GO" id="GO:0009236">
    <property type="term" value="P:cobalamin biosynthetic process"/>
    <property type="evidence" value="ECO:0007669"/>
    <property type="project" value="UniProtKB-UniRule"/>
</dbReference>
<dbReference type="GO" id="GO:0032259">
    <property type="term" value="P:methylation"/>
    <property type="evidence" value="ECO:0007669"/>
    <property type="project" value="UniProtKB-KW"/>
</dbReference>
<dbReference type="GO" id="GO:0019354">
    <property type="term" value="P:siroheme biosynthetic process"/>
    <property type="evidence" value="ECO:0007669"/>
    <property type="project" value="UniProtKB-UniRule"/>
</dbReference>
<dbReference type="CDD" id="cd11642">
    <property type="entry name" value="SUMT"/>
    <property type="match status" value="1"/>
</dbReference>
<dbReference type="FunFam" id="3.30.950.10:FF:000001">
    <property type="entry name" value="Siroheme synthase"/>
    <property type="match status" value="1"/>
</dbReference>
<dbReference type="FunFam" id="3.40.1010.10:FF:000001">
    <property type="entry name" value="Siroheme synthase"/>
    <property type="match status" value="1"/>
</dbReference>
<dbReference type="Gene3D" id="3.40.1010.10">
    <property type="entry name" value="Cobalt-precorrin-4 Transmethylase, Domain 1"/>
    <property type="match status" value="1"/>
</dbReference>
<dbReference type="Gene3D" id="3.30.950.10">
    <property type="entry name" value="Methyltransferase, Cobalt-precorrin-4 Transmethylase, Domain 2"/>
    <property type="match status" value="1"/>
</dbReference>
<dbReference type="Gene3D" id="3.40.50.720">
    <property type="entry name" value="NAD(P)-binding Rossmann-like Domain"/>
    <property type="match status" value="1"/>
</dbReference>
<dbReference type="Gene3D" id="1.10.8.210">
    <property type="entry name" value="Sirohaem synthase, dimerisation domain"/>
    <property type="match status" value="1"/>
</dbReference>
<dbReference type="Gene3D" id="3.30.160.110">
    <property type="entry name" value="Siroheme synthase, domain 2"/>
    <property type="match status" value="1"/>
</dbReference>
<dbReference type="HAMAP" id="MF_01646">
    <property type="entry name" value="Siroheme_synth"/>
    <property type="match status" value="1"/>
</dbReference>
<dbReference type="InterPro" id="IPR000878">
    <property type="entry name" value="4pyrrol_Mease"/>
</dbReference>
<dbReference type="InterPro" id="IPR035996">
    <property type="entry name" value="4pyrrol_Methylase_sf"/>
</dbReference>
<dbReference type="InterPro" id="IPR014777">
    <property type="entry name" value="4pyrrole_Mease_sub1"/>
</dbReference>
<dbReference type="InterPro" id="IPR014776">
    <property type="entry name" value="4pyrrole_Mease_sub2"/>
</dbReference>
<dbReference type="InterPro" id="IPR006366">
    <property type="entry name" value="CobA/CysG_C"/>
</dbReference>
<dbReference type="InterPro" id="IPR036291">
    <property type="entry name" value="NAD(P)-bd_dom_sf"/>
</dbReference>
<dbReference type="InterPro" id="IPR050161">
    <property type="entry name" value="Siro_Cobalamin_biosynth"/>
</dbReference>
<dbReference type="InterPro" id="IPR037115">
    <property type="entry name" value="Sirohaem_synt_dimer_dom_sf"/>
</dbReference>
<dbReference type="InterPro" id="IPR012409">
    <property type="entry name" value="Sirohaem_synth"/>
</dbReference>
<dbReference type="InterPro" id="IPR019478">
    <property type="entry name" value="Sirohaem_synthase_dimer_dom"/>
</dbReference>
<dbReference type="InterPro" id="IPR006367">
    <property type="entry name" value="Sirohaem_synthase_N"/>
</dbReference>
<dbReference type="InterPro" id="IPR003043">
    <property type="entry name" value="Uropor_MeTrfase_CS"/>
</dbReference>
<dbReference type="NCBIfam" id="TIGR01469">
    <property type="entry name" value="cobA_cysG_Cterm"/>
    <property type="match status" value="1"/>
</dbReference>
<dbReference type="NCBIfam" id="TIGR01470">
    <property type="entry name" value="cysG_Nterm"/>
    <property type="match status" value="1"/>
</dbReference>
<dbReference type="NCBIfam" id="NF004790">
    <property type="entry name" value="PRK06136.1"/>
    <property type="match status" value="1"/>
</dbReference>
<dbReference type="NCBIfam" id="NF007922">
    <property type="entry name" value="PRK10637.1"/>
    <property type="match status" value="1"/>
</dbReference>
<dbReference type="PANTHER" id="PTHR45790:SF1">
    <property type="entry name" value="SIROHEME SYNTHASE"/>
    <property type="match status" value="1"/>
</dbReference>
<dbReference type="PANTHER" id="PTHR45790">
    <property type="entry name" value="SIROHEME SYNTHASE-RELATED"/>
    <property type="match status" value="1"/>
</dbReference>
<dbReference type="Pfam" id="PF10414">
    <property type="entry name" value="CysG_dimeriser"/>
    <property type="match status" value="1"/>
</dbReference>
<dbReference type="Pfam" id="PF13241">
    <property type="entry name" value="NAD_binding_7"/>
    <property type="match status" value="1"/>
</dbReference>
<dbReference type="Pfam" id="PF00590">
    <property type="entry name" value="TP_methylase"/>
    <property type="match status" value="1"/>
</dbReference>
<dbReference type="PIRSF" id="PIRSF036426">
    <property type="entry name" value="Sirohaem_synth"/>
    <property type="match status" value="1"/>
</dbReference>
<dbReference type="SUPFAM" id="SSF51735">
    <property type="entry name" value="NAD(P)-binding Rossmann-fold domains"/>
    <property type="match status" value="1"/>
</dbReference>
<dbReference type="SUPFAM" id="SSF75615">
    <property type="entry name" value="Siroheme synthase middle domains-like"/>
    <property type="match status" value="1"/>
</dbReference>
<dbReference type="SUPFAM" id="SSF53790">
    <property type="entry name" value="Tetrapyrrole methylase"/>
    <property type="match status" value="1"/>
</dbReference>
<dbReference type="PROSITE" id="PS00839">
    <property type="entry name" value="SUMT_1"/>
    <property type="match status" value="1"/>
</dbReference>
<dbReference type="PROSITE" id="PS00840">
    <property type="entry name" value="SUMT_2"/>
    <property type="match status" value="1"/>
</dbReference>
<accession>Q7VQG9</accession>
<protein>
    <recommendedName>
        <fullName evidence="1">Siroheme synthase</fullName>
    </recommendedName>
    <domain>
        <recommendedName>
            <fullName evidence="1">Uroporphyrinogen-III C-methyltransferase</fullName>
            <shortName evidence="1">Urogen III methylase</shortName>
            <ecNumber evidence="1">2.1.1.107</ecNumber>
        </recommendedName>
        <alternativeName>
            <fullName evidence="1">SUMT</fullName>
        </alternativeName>
        <alternativeName>
            <fullName evidence="1">Uroporphyrinogen III methylase</fullName>
            <shortName evidence="1">UROM</shortName>
        </alternativeName>
    </domain>
    <domain>
        <recommendedName>
            <fullName evidence="1">Precorrin-2 dehydrogenase</fullName>
            <ecNumber evidence="1">1.3.1.76</ecNumber>
        </recommendedName>
    </domain>
    <domain>
        <recommendedName>
            <fullName evidence="1">Sirohydrochlorin ferrochelatase</fullName>
            <ecNumber evidence="1">4.99.1.4</ecNumber>
        </recommendedName>
    </domain>
</protein>
<reference key="1">
    <citation type="journal article" date="2003" name="Proc. Natl. Acad. Sci. U.S.A.">
        <title>The genome sequence of Blochmannia floridanus: comparative analysis of reduced genomes.</title>
        <authorList>
            <person name="Gil R."/>
            <person name="Silva F.J."/>
            <person name="Zientz E."/>
            <person name="Delmotte F."/>
            <person name="Gonzalez-Candelas F."/>
            <person name="Latorre A."/>
            <person name="Rausell C."/>
            <person name="Kamerbeek J."/>
            <person name="Gadau J."/>
            <person name="Hoelldobler B."/>
            <person name="van Ham R.C.H.J."/>
            <person name="Gross R."/>
            <person name="Moya A."/>
        </authorList>
    </citation>
    <scope>NUCLEOTIDE SEQUENCE [LARGE SCALE GENOMIC DNA]</scope>
</reference>
<keyword id="KW-0169">Cobalamin biosynthesis</keyword>
<keyword id="KW-0456">Lyase</keyword>
<keyword id="KW-0489">Methyltransferase</keyword>
<keyword id="KW-0511">Multifunctional enzyme</keyword>
<keyword id="KW-0520">NAD</keyword>
<keyword id="KW-0560">Oxidoreductase</keyword>
<keyword id="KW-0597">Phosphoprotein</keyword>
<keyword id="KW-0627">Porphyrin biosynthesis</keyword>
<keyword id="KW-1185">Reference proteome</keyword>
<keyword id="KW-0949">S-adenosyl-L-methionine</keyword>
<keyword id="KW-0808">Transferase</keyword>
<feature type="chain" id="PRO_0000330494" description="Siroheme synthase">
    <location>
        <begin position="1"/>
        <end position="461"/>
    </location>
</feature>
<feature type="region of interest" description="Precorrin-2 dehydrogenase /sirohydrochlorin ferrochelatase" evidence="1">
    <location>
        <begin position="1"/>
        <end position="204"/>
    </location>
</feature>
<feature type="region of interest" description="Uroporphyrinogen-III C-methyltransferase" evidence="1">
    <location>
        <begin position="218"/>
        <end position="461"/>
    </location>
</feature>
<feature type="active site" description="Proton acceptor" evidence="1">
    <location>
        <position position="250"/>
    </location>
</feature>
<feature type="active site" description="Proton donor" evidence="1">
    <location>
        <position position="272"/>
    </location>
</feature>
<feature type="binding site" evidence="1">
    <location>
        <begin position="22"/>
        <end position="23"/>
    </location>
    <ligand>
        <name>NAD(+)</name>
        <dbReference type="ChEBI" id="CHEBI:57540"/>
    </ligand>
</feature>
<feature type="binding site" evidence="1">
    <location>
        <begin position="43"/>
        <end position="44"/>
    </location>
    <ligand>
        <name>NAD(+)</name>
        <dbReference type="ChEBI" id="CHEBI:57540"/>
    </ligand>
</feature>
<feature type="binding site" evidence="1">
    <location>
        <position position="227"/>
    </location>
    <ligand>
        <name>S-adenosyl-L-methionine</name>
        <dbReference type="ChEBI" id="CHEBI:59789"/>
    </ligand>
</feature>
<feature type="binding site" evidence="1">
    <location>
        <begin position="303"/>
        <end position="305"/>
    </location>
    <ligand>
        <name>S-adenosyl-L-methionine</name>
        <dbReference type="ChEBI" id="CHEBI:59789"/>
    </ligand>
</feature>
<feature type="binding site" evidence="1">
    <location>
        <position position="308"/>
    </location>
    <ligand>
        <name>S-adenosyl-L-methionine</name>
        <dbReference type="ChEBI" id="CHEBI:59789"/>
    </ligand>
</feature>
<feature type="binding site" evidence="1">
    <location>
        <position position="386"/>
    </location>
    <ligand>
        <name>S-adenosyl-L-methionine</name>
        <dbReference type="ChEBI" id="CHEBI:59789"/>
    </ligand>
</feature>
<feature type="binding site" evidence="1">
    <location>
        <position position="415"/>
    </location>
    <ligand>
        <name>S-adenosyl-L-methionine</name>
        <dbReference type="ChEBI" id="CHEBI:59789"/>
    </ligand>
</feature>
<feature type="modified residue" description="Phosphoserine" evidence="1">
    <location>
        <position position="128"/>
    </location>
</feature>
<name>CYSG_BLOFL</name>
<evidence type="ECO:0000255" key="1">
    <source>
        <dbReference type="HAMAP-Rule" id="MF_01646"/>
    </source>
</evidence>